<sequence length="361" mass="40896">MKTLIAAYSGVLRGTGSSILSALQDLFSVTWLNRAKVEKQLQVISVLQWVLSFLVLGVACSVILMYTFCTDCWLIAVLYFTWLVFDWNTPKKGGRRSQWVRNWAVWRYFRDYFPIQLVKTHNLLTSRNYIFGYHPHGIMGLGAFCNFSTEATEVSKKFPGIRPYLATLAGNFRMPVLREYLMSGGICPVNRDTIDYLLSKNGSGNAIIIVVGGAAESLSSMPGKNAVTLRNRKGFVKLALRHGADLVPTYSFGENEVYKQVIFEEGSWGRWVQKKFQKYIGFAPCIFHGRGLFSSDTWGLVPYSKPITTVVGEPITIPRLERPTQQDIDLYHAMYVQALVKLFDQHKTKFGLPETEVLEVN</sequence>
<reference key="1">
    <citation type="journal article" date="2003" name="Cytogenet. Genome Res.">
        <title>Genomic organization of the DGAT2/MOGAT gene family in cattle (Bos taurus) and other mammals.</title>
        <authorList>
            <person name="Winter A."/>
            <person name="van Eckeveld M."/>
            <person name="Bininda-Emonds O.R.P."/>
            <person name="Habermann F.A."/>
            <person name="Fries R."/>
        </authorList>
    </citation>
    <scope>NUCLEOTIDE SEQUENCE [GENOMIC DNA / MRNA]</scope>
</reference>
<reference key="2">
    <citation type="journal article" date="2005" name="BMC Genomics">
        <title>Characterization of 954 bovine full-CDS cDNA sequences.</title>
        <authorList>
            <person name="Harhay G.P."/>
            <person name="Sonstegard T.S."/>
            <person name="Keele J.W."/>
            <person name="Heaton M.P."/>
            <person name="Clawson M.L."/>
            <person name="Snelling W.M."/>
            <person name="Wiedmann R.T."/>
            <person name="Van Tassell C.P."/>
            <person name="Smith T.P.L."/>
        </authorList>
    </citation>
    <scope>NUCLEOTIDE SEQUENCE [LARGE SCALE MRNA]</scope>
</reference>
<reference key="3">
    <citation type="submission" date="2004-07" db="EMBL/GenBank/DDBJ databases">
        <authorList>
            <person name="Xu X.R."/>
            <person name="Xu S.Z."/>
            <person name="Li J.Y."/>
        </authorList>
    </citation>
    <scope>NUCLEOTIDE SEQUENCE [GENOMIC DNA] OF 75-111; 156-205 AND 231-352</scope>
    <scope>NUCLEOTIDE SEQUENCE [MRNA] OF 93-361</scope>
</reference>
<evidence type="ECO:0000250" key="1"/>
<evidence type="ECO:0000250" key="2">
    <source>
        <dbReference type="UniProtKB" id="Q96PD7"/>
    </source>
</evidence>
<evidence type="ECO:0000250" key="3">
    <source>
        <dbReference type="UniProtKB" id="Q9DCV3"/>
    </source>
</evidence>
<evidence type="ECO:0000255" key="4"/>
<evidence type="ECO:0000305" key="5"/>
<name>DGAT2_BOVIN</name>
<gene>
    <name type="primary">DGAT2</name>
</gene>
<proteinExistence type="evidence at transcript level"/>
<feature type="chain" id="PRO_0000249044" description="Diacylglycerol O-acyltransferase 2">
    <location>
        <begin position="1"/>
        <end position="361"/>
    </location>
</feature>
<feature type="topological domain" description="Cytoplasmic" evidence="4">
    <location>
        <begin position="1"/>
        <end position="42"/>
    </location>
</feature>
<feature type="transmembrane region" description="Helical" evidence="4">
    <location>
        <begin position="43"/>
        <end position="61"/>
    </location>
</feature>
<feature type="topological domain" description="Lumenal" evidence="4">
    <location>
        <begin position="62"/>
        <end position="65"/>
    </location>
</feature>
<feature type="transmembrane region" description="Helical" evidence="4">
    <location>
        <begin position="66"/>
        <end position="85"/>
    </location>
</feature>
<feature type="topological domain" description="Cytoplasmic" evidence="4">
    <location>
        <begin position="86"/>
        <end position="361"/>
    </location>
</feature>
<feature type="sequence conflict" description="In Ref. 2; ABQ12972." evidence="5" ref="2">
    <original>A</original>
    <variation>S</variation>
    <location>
        <position position="35"/>
    </location>
</feature>
<feature type="sequence conflict" description="In Ref. 3; AAT02660." evidence="5" ref="3">
    <original>L</original>
    <variation>P</variation>
    <location>
        <position position="300"/>
    </location>
</feature>
<protein>
    <recommendedName>
        <fullName evidence="5">Diacylglycerol O-acyltransferase 2</fullName>
        <ecNumber evidence="2">2.3.1.20</ecNumber>
    </recommendedName>
    <alternativeName>
        <fullName>Acyl-CoA retinol O-fatty-acyltransferase</fullName>
        <shortName>ARAT</shortName>
        <shortName>Retinol O-fatty-acyltransferase</shortName>
        <ecNumber evidence="2">2.3.1.76</ecNumber>
    </alternativeName>
    <alternativeName>
        <fullName>Diglyceride acyltransferase 2</fullName>
    </alternativeName>
</protein>
<accession>Q70VZ8</accession>
<accession>A5D9B3</accession>
<accession>Q6B852</accession>
<accession>Q6PP93</accession>
<accession>Q6PP94</accession>
<accession>Q6PP95</accession>
<accession>Q6PP96</accession>
<keyword id="KW-0012">Acyltransferase</keyword>
<keyword id="KW-0963">Cytoplasm</keyword>
<keyword id="KW-0256">Endoplasmic reticulum</keyword>
<keyword id="KW-0319">Glycerol metabolism</keyword>
<keyword id="KW-0444">Lipid biosynthesis</keyword>
<keyword id="KW-0551">Lipid droplet</keyword>
<keyword id="KW-0443">Lipid metabolism</keyword>
<keyword id="KW-0472">Membrane</keyword>
<keyword id="KW-1185">Reference proteome</keyword>
<keyword id="KW-0808">Transferase</keyword>
<keyword id="KW-0812">Transmembrane</keyword>
<keyword id="KW-1133">Transmembrane helix</keyword>
<comment type="function">
    <text evidence="2 3">Essential acyltransferase that catalyzes the terminal and only committed step in triacylglycerol synthesis by using diacylglycerol and fatty acyl CoA as substrates. Required for synthesis and storage of intracellular triglycerides (By similarity). Probably plays a central role in cytosolic lipid accumulation. In liver, is primarily responsible for incorporating endogenously synthesized fatty acids into triglycerides (By similarity). Also functions as an acyl-CoA retinol acyltransferase (ARAT) (By similarity). Also able to use 1-monoalkylglycerol (1-MAkG) as an acyl acceptor for the synthesis of monoalkyl-monoacylglycerol (MAMAG) (By similarity).</text>
</comment>
<comment type="catalytic activity">
    <reaction evidence="2">
        <text>an acyl-CoA + a 1,2-diacyl-sn-glycerol = a triacyl-sn-glycerol + CoA</text>
        <dbReference type="Rhea" id="RHEA:10868"/>
        <dbReference type="ChEBI" id="CHEBI:17815"/>
        <dbReference type="ChEBI" id="CHEBI:57287"/>
        <dbReference type="ChEBI" id="CHEBI:58342"/>
        <dbReference type="ChEBI" id="CHEBI:64615"/>
        <dbReference type="EC" id="2.3.1.20"/>
    </reaction>
    <physiologicalReaction direction="left-to-right" evidence="2">
        <dbReference type="Rhea" id="RHEA:10869"/>
    </physiologicalReaction>
</comment>
<comment type="catalytic activity">
    <reaction evidence="2">
        <text>all-trans-retinol + an acyl-CoA = an all-trans-retinyl ester + CoA</text>
        <dbReference type="Rhea" id="RHEA:11488"/>
        <dbReference type="ChEBI" id="CHEBI:17336"/>
        <dbReference type="ChEBI" id="CHEBI:57287"/>
        <dbReference type="ChEBI" id="CHEBI:58342"/>
        <dbReference type="ChEBI" id="CHEBI:63410"/>
        <dbReference type="EC" id="2.3.1.76"/>
    </reaction>
    <physiologicalReaction direction="left-to-right" evidence="2">
        <dbReference type="Rhea" id="RHEA:11489"/>
    </physiologicalReaction>
</comment>
<comment type="catalytic activity">
    <reaction evidence="2">
        <text>2-(9Z-octadecenoyl)-glycerol + (9Z)-octadecenoyl-CoA = 1,2-di-(9Z-octadecenoyl)-sn-glycerol + CoA</text>
        <dbReference type="Rhea" id="RHEA:37911"/>
        <dbReference type="ChEBI" id="CHEBI:52333"/>
        <dbReference type="ChEBI" id="CHEBI:57287"/>
        <dbReference type="ChEBI" id="CHEBI:57387"/>
        <dbReference type="ChEBI" id="CHEBI:73990"/>
    </reaction>
    <physiologicalReaction direction="left-to-right" evidence="2">
        <dbReference type="Rhea" id="RHEA:37912"/>
    </physiologicalReaction>
</comment>
<comment type="catalytic activity">
    <reaction evidence="2">
        <text>1,2-di-(9Z-octadecenoyl)-sn-glycerol + (9Z)-octadecenoyl-CoA = 1,2,3-tri-(9Z-octadecenoyl)-glycerol + CoA</text>
        <dbReference type="Rhea" id="RHEA:38219"/>
        <dbReference type="ChEBI" id="CHEBI:52333"/>
        <dbReference type="ChEBI" id="CHEBI:53753"/>
        <dbReference type="ChEBI" id="CHEBI:57287"/>
        <dbReference type="ChEBI" id="CHEBI:57387"/>
    </reaction>
    <physiologicalReaction direction="left-to-right" evidence="2">
        <dbReference type="Rhea" id="RHEA:38220"/>
    </physiologicalReaction>
</comment>
<comment type="catalytic activity">
    <reaction evidence="2">
        <text>all-trans-retinol + hexadecanoyl-CoA = all-trans-retinyl hexadecanoate + CoA</text>
        <dbReference type="Rhea" id="RHEA:38175"/>
        <dbReference type="ChEBI" id="CHEBI:17336"/>
        <dbReference type="ChEBI" id="CHEBI:17616"/>
        <dbReference type="ChEBI" id="CHEBI:57287"/>
        <dbReference type="ChEBI" id="CHEBI:57379"/>
    </reaction>
    <physiologicalReaction direction="left-to-right" evidence="2">
        <dbReference type="Rhea" id="RHEA:38176"/>
    </physiologicalReaction>
</comment>
<comment type="catalytic activity">
    <reaction evidence="2">
        <text>1-O-(9Z-octadecenyl)-glycerol + (9Z)-octadecenoyl-CoA = 1-O-(9Z-octadecyl)-3-(9Z-octadecenoyl)-glycerol + CoA</text>
        <dbReference type="Rhea" id="RHEA:55340"/>
        <dbReference type="ChEBI" id="CHEBI:34116"/>
        <dbReference type="ChEBI" id="CHEBI:57287"/>
        <dbReference type="ChEBI" id="CHEBI:57387"/>
        <dbReference type="ChEBI" id="CHEBI:197429"/>
    </reaction>
    <physiologicalReaction direction="left-to-right" evidence="2">
        <dbReference type="Rhea" id="RHEA:55341"/>
    </physiologicalReaction>
</comment>
<comment type="catalytic activity">
    <reaction evidence="2">
        <text>1-(9Z-octadecenoyl)-glycerol + (9Z)-octadecenoyl-CoA = 1,2-di-(9Z-octadecenoyl)-glycerol + CoA</text>
        <dbReference type="Rhea" id="RHEA:37915"/>
        <dbReference type="ChEBI" id="CHEBI:52323"/>
        <dbReference type="ChEBI" id="CHEBI:57287"/>
        <dbReference type="ChEBI" id="CHEBI:57387"/>
        <dbReference type="ChEBI" id="CHEBI:75342"/>
    </reaction>
    <physiologicalReaction direction="left-to-right" evidence="2">
        <dbReference type="Rhea" id="RHEA:37916"/>
    </physiologicalReaction>
</comment>
<comment type="catalytic activity">
    <reaction evidence="3">
        <text>1,2-di-(9Z-octadecenoyl)-sn-glycerol + hexadecanoyl-CoA = 1,2-di-(9Z)-octadecenoyl-3-hexadecanoyl-sn-glycerol + CoA</text>
        <dbReference type="Rhea" id="RHEA:38163"/>
        <dbReference type="ChEBI" id="CHEBI:52333"/>
        <dbReference type="ChEBI" id="CHEBI:57287"/>
        <dbReference type="ChEBI" id="CHEBI:57379"/>
        <dbReference type="ChEBI" id="CHEBI:75583"/>
    </reaction>
    <physiologicalReaction direction="left-to-right" evidence="3">
        <dbReference type="Rhea" id="RHEA:38164"/>
    </physiologicalReaction>
</comment>
<comment type="catalytic activity">
    <reaction evidence="3">
        <text>1,3-di-(9Z-octadecenoyl)-glycerol + (9Z)-octadecenoyl-CoA = 1,2,3-tri-(9Z-octadecenoyl)-glycerol + CoA</text>
        <dbReference type="Rhea" id="RHEA:38435"/>
        <dbReference type="ChEBI" id="CHEBI:53753"/>
        <dbReference type="ChEBI" id="CHEBI:57287"/>
        <dbReference type="ChEBI" id="CHEBI:57387"/>
        <dbReference type="ChEBI" id="CHEBI:75735"/>
    </reaction>
    <physiologicalReaction direction="left-to-right" evidence="3">
        <dbReference type="Rhea" id="RHEA:38436"/>
    </physiologicalReaction>
</comment>
<comment type="catalytic activity">
    <reaction evidence="3">
        <text>2,3-di-(9Z)-octadecenoyl-sn-glycerol + (9Z)-octadecenoyl-CoA = 1,2,3-tri-(9Z-octadecenoyl)-glycerol + CoA</text>
        <dbReference type="Rhea" id="RHEA:38439"/>
        <dbReference type="ChEBI" id="CHEBI:53753"/>
        <dbReference type="ChEBI" id="CHEBI:57287"/>
        <dbReference type="ChEBI" id="CHEBI:57387"/>
        <dbReference type="ChEBI" id="CHEBI:75824"/>
    </reaction>
    <physiologicalReaction direction="left-to-right" evidence="3">
        <dbReference type="Rhea" id="RHEA:38440"/>
    </physiologicalReaction>
</comment>
<comment type="catalytic activity">
    <reaction evidence="3">
        <text>2-(9Z-octadecenoyl)-glycerol + hexadecanoyl-CoA = 1-hexadecanoyl-2-(9Z-octadecenoyl)-sn-glycerol + CoA</text>
        <dbReference type="Rhea" id="RHEA:38071"/>
        <dbReference type="ChEBI" id="CHEBI:57287"/>
        <dbReference type="ChEBI" id="CHEBI:57379"/>
        <dbReference type="ChEBI" id="CHEBI:73990"/>
        <dbReference type="ChEBI" id="CHEBI:75466"/>
    </reaction>
    <physiologicalReaction direction="left-to-right" evidence="3">
        <dbReference type="Rhea" id="RHEA:38072"/>
    </physiologicalReaction>
</comment>
<comment type="activity regulation">
    <text evidence="1">Inhibited by niacin.</text>
</comment>
<comment type="pathway">
    <text>Glycerolipid metabolism; triacylglycerol biosynthesis.</text>
</comment>
<comment type="subunit">
    <text evidence="2 3">Forms multimeric complexes consisting of several DGAT2 subunits (By similarity). Interacts with SLC27A1 and this interaction is enhanced in the presence of ZFYVE1 (By similarity).</text>
</comment>
<comment type="subcellular location">
    <subcellularLocation>
        <location evidence="2">Endoplasmic reticulum membrane</location>
        <topology evidence="2">Multi-pass membrane protein</topology>
    </subcellularLocation>
    <subcellularLocation>
        <location evidence="2">Lipid droplet</location>
    </subcellularLocation>
    <subcellularLocation>
        <location evidence="2">Cytoplasm</location>
        <location evidence="2">Perinuclear region</location>
    </subcellularLocation>
</comment>
<comment type="similarity">
    <text evidence="5">Belongs to the diacylglycerol acyltransferase family.</text>
</comment>
<organism>
    <name type="scientific">Bos taurus</name>
    <name type="common">Bovine</name>
    <dbReference type="NCBI Taxonomy" id="9913"/>
    <lineage>
        <taxon>Eukaryota</taxon>
        <taxon>Metazoa</taxon>
        <taxon>Chordata</taxon>
        <taxon>Craniata</taxon>
        <taxon>Vertebrata</taxon>
        <taxon>Euteleostomi</taxon>
        <taxon>Mammalia</taxon>
        <taxon>Eutheria</taxon>
        <taxon>Laurasiatheria</taxon>
        <taxon>Artiodactyla</taxon>
        <taxon>Ruminantia</taxon>
        <taxon>Pecora</taxon>
        <taxon>Bovidae</taxon>
        <taxon>Bovinae</taxon>
        <taxon>Bos</taxon>
    </lineage>
</organism>
<dbReference type="EC" id="2.3.1.20" evidence="2"/>
<dbReference type="EC" id="2.3.1.76" evidence="2"/>
<dbReference type="EMBL" id="AJ519787">
    <property type="protein sequence ID" value="CAD58592.1"/>
    <property type="molecule type" value="mRNA"/>
</dbReference>
<dbReference type="EMBL" id="AJ534368">
    <property type="protein sequence ID" value="CAD58968.1"/>
    <property type="molecule type" value="Genomic_DNA"/>
</dbReference>
<dbReference type="EMBL" id="AJ534369">
    <property type="protein sequence ID" value="CAD58968.1"/>
    <property type="status" value="JOINED"/>
    <property type="molecule type" value="Genomic_DNA"/>
</dbReference>
<dbReference type="EMBL" id="AJ534370">
    <property type="protein sequence ID" value="CAD58968.1"/>
    <property type="status" value="JOINED"/>
    <property type="molecule type" value="Genomic_DNA"/>
</dbReference>
<dbReference type="EMBL" id="AJ534371">
    <property type="protein sequence ID" value="CAD58968.1"/>
    <property type="status" value="JOINED"/>
    <property type="molecule type" value="Genomic_DNA"/>
</dbReference>
<dbReference type="EMBL" id="AJ534372">
    <property type="protein sequence ID" value="CAD58968.1"/>
    <property type="status" value="JOINED"/>
    <property type="molecule type" value="Genomic_DNA"/>
</dbReference>
<dbReference type="EMBL" id="BT030532">
    <property type="protein sequence ID" value="ABQ12972.1"/>
    <property type="molecule type" value="mRNA"/>
</dbReference>
<dbReference type="EMBL" id="AY589091">
    <property type="protein sequence ID" value="AAT02657.1"/>
    <property type="molecule type" value="Genomic_DNA"/>
</dbReference>
<dbReference type="EMBL" id="AY589092">
    <property type="protein sequence ID" value="AAT02658.1"/>
    <property type="molecule type" value="Genomic_DNA"/>
</dbReference>
<dbReference type="EMBL" id="AY589093">
    <property type="protein sequence ID" value="AAT02659.1"/>
    <property type="molecule type" value="Genomic_DNA"/>
</dbReference>
<dbReference type="EMBL" id="AY589094">
    <property type="protein sequence ID" value="AAT02660.1"/>
    <property type="molecule type" value="Genomic_DNA"/>
</dbReference>
<dbReference type="EMBL" id="AY675174">
    <property type="protein sequence ID" value="AAT78344.1"/>
    <property type="molecule type" value="mRNA"/>
</dbReference>
<dbReference type="RefSeq" id="NP_991362.2">
    <property type="nucleotide sequence ID" value="NM_205793.2"/>
</dbReference>
<dbReference type="FunCoup" id="Q70VZ8">
    <property type="interactions" value="618"/>
</dbReference>
<dbReference type="PaxDb" id="9913-ENSBTAP00000001536"/>
<dbReference type="GeneID" id="404129"/>
<dbReference type="KEGG" id="bta:404129"/>
<dbReference type="CTD" id="84649"/>
<dbReference type="eggNOG" id="KOG0831">
    <property type="taxonomic scope" value="Eukaryota"/>
</dbReference>
<dbReference type="HOGENOM" id="CLU_023995_0_0_1"/>
<dbReference type="InParanoid" id="Q70VZ8"/>
<dbReference type="OrthoDB" id="264532at2759"/>
<dbReference type="TreeFam" id="TF314707"/>
<dbReference type="UniPathway" id="UPA00282"/>
<dbReference type="Proteomes" id="UP000009136">
    <property type="component" value="Unplaced"/>
</dbReference>
<dbReference type="GO" id="GO:0005783">
    <property type="term" value="C:endoplasmic reticulum"/>
    <property type="evidence" value="ECO:0000250"/>
    <property type="project" value="AgBase"/>
</dbReference>
<dbReference type="GO" id="GO:0005789">
    <property type="term" value="C:endoplasmic reticulum membrane"/>
    <property type="evidence" value="ECO:0000250"/>
    <property type="project" value="UniProtKB"/>
</dbReference>
<dbReference type="GO" id="GO:0005811">
    <property type="term" value="C:lipid droplet"/>
    <property type="evidence" value="ECO:0000250"/>
    <property type="project" value="UniProtKB"/>
</dbReference>
<dbReference type="GO" id="GO:0016020">
    <property type="term" value="C:membrane"/>
    <property type="evidence" value="ECO:0000250"/>
    <property type="project" value="AgBase"/>
</dbReference>
<dbReference type="GO" id="GO:1990578">
    <property type="term" value="C:perinuclear endoplasmic reticulum membrane"/>
    <property type="evidence" value="ECO:0000250"/>
    <property type="project" value="UniProtKB"/>
</dbReference>
<dbReference type="GO" id="GO:0048471">
    <property type="term" value="C:perinuclear region of cytoplasm"/>
    <property type="evidence" value="ECO:0000250"/>
    <property type="project" value="AgBase"/>
</dbReference>
<dbReference type="GO" id="GO:0003846">
    <property type="term" value="F:2-acylglycerol O-acyltransferase activity"/>
    <property type="evidence" value="ECO:0000250"/>
    <property type="project" value="AgBase"/>
</dbReference>
<dbReference type="GO" id="GO:0004144">
    <property type="term" value="F:diacylglycerol O-acyltransferase activity"/>
    <property type="evidence" value="ECO:0000314"/>
    <property type="project" value="AgBase"/>
</dbReference>
<dbReference type="GO" id="GO:0050252">
    <property type="term" value="F:retinol O-fatty-acyltransferase activity"/>
    <property type="evidence" value="ECO:0007669"/>
    <property type="project" value="UniProtKB-EC"/>
</dbReference>
<dbReference type="GO" id="GO:0071400">
    <property type="term" value="P:cellular response to oleic acid"/>
    <property type="evidence" value="ECO:0000250"/>
    <property type="project" value="AgBase"/>
</dbReference>
<dbReference type="GO" id="GO:0042632">
    <property type="term" value="P:cholesterol homeostasis"/>
    <property type="evidence" value="ECO:0000250"/>
    <property type="project" value="AgBase"/>
</dbReference>
<dbReference type="GO" id="GO:0006651">
    <property type="term" value="P:diacylglycerol biosynthetic process"/>
    <property type="evidence" value="ECO:0000250"/>
    <property type="project" value="UniProtKB"/>
</dbReference>
<dbReference type="GO" id="GO:0046339">
    <property type="term" value="P:diacylglycerol metabolic process"/>
    <property type="evidence" value="ECO:0000250"/>
    <property type="project" value="AgBase"/>
</dbReference>
<dbReference type="GO" id="GO:0060613">
    <property type="term" value="P:fat pad development"/>
    <property type="evidence" value="ECO:0000250"/>
    <property type="project" value="AgBase"/>
</dbReference>
<dbReference type="GO" id="GO:0055089">
    <property type="term" value="P:fatty acid homeostasis"/>
    <property type="evidence" value="ECO:0000250"/>
    <property type="project" value="AgBase"/>
</dbReference>
<dbReference type="GO" id="GO:0006071">
    <property type="term" value="P:glycerol metabolic process"/>
    <property type="evidence" value="ECO:0007669"/>
    <property type="project" value="UniProtKB-KW"/>
</dbReference>
<dbReference type="GO" id="GO:0035356">
    <property type="term" value="P:intracellular triglyceride homeostasis"/>
    <property type="evidence" value="ECO:0000250"/>
    <property type="project" value="AgBase"/>
</dbReference>
<dbReference type="GO" id="GO:0019915">
    <property type="term" value="P:lipid storage"/>
    <property type="evidence" value="ECO:0000250"/>
    <property type="project" value="AgBase"/>
</dbReference>
<dbReference type="GO" id="GO:0035336">
    <property type="term" value="P:long-chain fatty-acyl-CoA metabolic process"/>
    <property type="evidence" value="ECO:0000250"/>
    <property type="project" value="AgBase"/>
</dbReference>
<dbReference type="GO" id="GO:0034383">
    <property type="term" value="P:low-density lipoprotein particle clearance"/>
    <property type="evidence" value="ECO:0000250"/>
    <property type="project" value="AgBase"/>
</dbReference>
<dbReference type="GO" id="GO:0006640">
    <property type="term" value="P:monoacylglycerol biosynthetic process"/>
    <property type="evidence" value="ECO:0000250"/>
    <property type="project" value="UniProtKB"/>
</dbReference>
<dbReference type="GO" id="GO:0097006">
    <property type="term" value="P:regulation of plasma lipoprotein particle levels"/>
    <property type="evidence" value="ECO:0000250"/>
    <property type="project" value="AgBase"/>
</dbReference>
<dbReference type="GO" id="GO:0019432">
    <property type="term" value="P:triglyceride biosynthetic process"/>
    <property type="evidence" value="ECO:0000250"/>
    <property type="project" value="AgBase"/>
</dbReference>
<dbReference type="CDD" id="cd07987">
    <property type="entry name" value="LPLAT_MGAT-like"/>
    <property type="match status" value="1"/>
</dbReference>
<dbReference type="InterPro" id="IPR007130">
    <property type="entry name" value="DAGAT"/>
</dbReference>
<dbReference type="PANTHER" id="PTHR12317">
    <property type="entry name" value="DIACYLGLYCEROL O-ACYLTRANSFERASE"/>
    <property type="match status" value="1"/>
</dbReference>
<dbReference type="PANTHER" id="PTHR12317:SF14">
    <property type="entry name" value="DIACYLGLYCEROL O-ACYLTRANSFERASE 2"/>
    <property type="match status" value="1"/>
</dbReference>
<dbReference type="Pfam" id="PF03982">
    <property type="entry name" value="DAGAT"/>
    <property type="match status" value="1"/>
</dbReference>